<dbReference type="EMBL" id="CU928181">
    <property type="protein sequence ID" value="CAR31066.1"/>
    <property type="molecule type" value="Genomic_DNA"/>
</dbReference>
<dbReference type="RefSeq" id="XP_002499321.1">
    <property type="nucleotide sequence ID" value="XM_002499276.1"/>
</dbReference>
<dbReference type="SMR" id="C5E4V5"/>
<dbReference type="FunCoup" id="C5E4V5">
    <property type="interactions" value="29"/>
</dbReference>
<dbReference type="STRING" id="559307.C5E4V5"/>
<dbReference type="GeneID" id="8204876"/>
<dbReference type="KEGG" id="zro:ZYRO0E09064g"/>
<dbReference type="HOGENOM" id="CLU_023952_1_0_1"/>
<dbReference type="InParanoid" id="C5E4V5"/>
<dbReference type="Proteomes" id="UP000008536">
    <property type="component" value="Chromosome E"/>
</dbReference>
<dbReference type="GO" id="GO:0005739">
    <property type="term" value="C:mitochondrion"/>
    <property type="evidence" value="ECO:0007669"/>
    <property type="project" value="UniProtKB-SubCell"/>
</dbReference>
<dbReference type="GO" id="GO:1990904">
    <property type="term" value="C:ribonucleoprotein complex"/>
    <property type="evidence" value="ECO:0007669"/>
    <property type="project" value="UniProtKB-KW"/>
</dbReference>
<dbReference type="GO" id="GO:0030435">
    <property type="term" value="P:sporulation resulting in formation of a cellular spore"/>
    <property type="evidence" value="ECO:0007669"/>
    <property type="project" value="UniProtKB-KW"/>
</dbReference>
<dbReference type="Gene3D" id="1.20.120.20">
    <property type="entry name" value="Apolipoprotein"/>
    <property type="match status" value="1"/>
</dbReference>
<dbReference type="SUPFAM" id="SSF47162">
    <property type="entry name" value="Apolipoprotein"/>
    <property type="match status" value="1"/>
</dbReference>
<comment type="function">
    <text evidence="1">Involved in spore wall assembly. May be a component of the mitochondrial RNase MRP (MtMRP), a ribonucleoprotein endoribonuclease involved in the cleaving RNA transcripts to generate primers for DNA replication in mitochondria.</text>
</comment>
<comment type="subunit">
    <text evidence="1">Component of the mitochondria-localized RNase mitochondrial RNA-processing (RNase MRP) composed of one single RNA encoded by the NME1 gene and at least 31 proteins. Absent in the nucleus-localized RNase MRP (NuMRP).</text>
</comment>
<comment type="subcellular location">
    <subcellularLocation>
        <location evidence="1">Mitochondrion</location>
    </subcellularLocation>
</comment>
<comment type="similarity">
    <text evidence="4">Belongs to the SHE10 family.</text>
</comment>
<evidence type="ECO:0000250" key="1">
    <source>
        <dbReference type="UniProtKB" id="P53075"/>
    </source>
</evidence>
<evidence type="ECO:0000255" key="2"/>
<evidence type="ECO:0000256" key="3">
    <source>
        <dbReference type="SAM" id="MobiDB-lite"/>
    </source>
</evidence>
<evidence type="ECO:0000305" key="4"/>
<accession>C5E4V5</accession>
<proteinExistence type="inferred from homology"/>
<gene>
    <name evidence="1" type="primary">SHE10</name>
    <name type="ordered locus">ZYRO0E09064g</name>
</gene>
<reference key="1">
    <citation type="journal article" date="2009" name="Genome Res.">
        <title>Comparative genomics of protoploid Saccharomycetaceae.</title>
        <authorList>
            <consortium name="The Genolevures Consortium"/>
            <person name="Souciet J.-L."/>
            <person name="Dujon B."/>
            <person name="Gaillardin C."/>
            <person name="Johnston M."/>
            <person name="Baret P.V."/>
            <person name="Cliften P."/>
            <person name="Sherman D.J."/>
            <person name="Weissenbach J."/>
            <person name="Westhof E."/>
            <person name="Wincker P."/>
            <person name="Jubin C."/>
            <person name="Poulain J."/>
            <person name="Barbe V."/>
            <person name="Segurens B."/>
            <person name="Artiguenave F."/>
            <person name="Anthouard V."/>
            <person name="Vacherie B."/>
            <person name="Val M.-E."/>
            <person name="Fulton R.S."/>
            <person name="Minx P."/>
            <person name="Wilson R."/>
            <person name="Durrens P."/>
            <person name="Jean G."/>
            <person name="Marck C."/>
            <person name="Martin T."/>
            <person name="Nikolski M."/>
            <person name="Rolland T."/>
            <person name="Seret M.-L."/>
            <person name="Casaregola S."/>
            <person name="Despons L."/>
            <person name="Fairhead C."/>
            <person name="Fischer G."/>
            <person name="Lafontaine I."/>
            <person name="Leh V."/>
            <person name="Lemaire M."/>
            <person name="de Montigny J."/>
            <person name="Neuveglise C."/>
            <person name="Thierry A."/>
            <person name="Blanc-Lenfle I."/>
            <person name="Bleykasten C."/>
            <person name="Diffels J."/>
            <person name="Fritsch E."/>
            <person name="Frangeul L."/>
            <person name="Goeffon A."/>
            <person name="Jauniaux N."/>
            <person name="Kachouri-Lafond R."/>
            <person name="Payen C."/>
            <person name="Potier S."/>
            <person name="Pribylova L."/>
            <person name="Ozanne C."/>
            <person name="Richard G.-F."/>
            <person name="Sacerdot C."/>
            <person name="Straub M.-L."/>
            <person name="Talla E."/>
        </authorList>
    </citation>
    <scope>NUCLEOTIDE SEQUENCE [LARGE SCALE GENOMIC DNA]</scope>
    <source>
        <strain>ATCC 2623 / CBS 732 / BCRC 21506 / NBRC 1130 / NCYC 568 / NRRL Y-229</strain>
    </source>
</reference>
<feature type="signal peptide" evidence="2">
    <location>
        <begin position="1"/>
        <end position="18"/>
    </location>
</feature>
<feature type="chain" id="PRO_0000408915" description="Outer spore wall assembly protein SHE10">
    <location>
        <begin position="19"/>
        <end position="689"/>
    </location>
</feature>
<feature type="region of interest" description="Disordered" evidence="3">
    <location>
        <begin position="259"/>
        <end position="308"/>
    </location>
</feature>
<feature type="region of interest" description="Disordered" evidence="3">
    <location>
        <begin position="610"/>
        <end position="689"/>
    </location>
</feature>
<feature type="coiled-coil region" evidence="2">
    <location>
        <begin position="406"/>
        <end position="435"/>
    </location>
</feature>
<feature type="compositionally biased region" description="Low complexity" evidence="3">
    <location>
        <begin position="270"/>
        <end position="308"/>
    </location>
</feature>
<feature type="compositionally biased region" description="Basic and acidic residues" evidence="3">
    <location>
        <begin position="610"/>
        <end position="626"/>
    </location>
</feature>
<feature type="compositionally biased region" description="Polar residues" evidence="3">
    <location>
        <begin position="627"/>
        <end position="637"/>
    </location>
</feature>
<feature type="compositionally biased region" description="Polar residues" evidence="3">
    <location>
        <begin position="655"/>
        <end position="670"/>
    </location>
</feature>
<feature type="compositionally biased region" description="Polar residues" evidence="3">
    <location>
        <begin position="677"/>
        <end position="689"/>
    </location>
</feature>
<sequence length="689" mass="78557">MKILTKFFLLLVVTTCSLHYYCQIGQCSTQLQRVCHYTTPSVWDELLVEKNEFYREQLNPKVKVLKSHISQINSHYQDKVLPKLVDLGNRFYFDIVSPRIDNVCEFWEEFELKPYRERSLNQIRKVRQRIWFYYSVYLKPNLTKLDNQYALSDKYGKVHNKIAPFVAEIAQNFQNVYHQAAAKVHPHWENLRRTVNAKWEPISSSLWQRCRTNEICFKTNAQLKNIWKNLKLGCDYLSIYVHDALSPYSDGLESNVRATKAKSKSKPRVNASASARGNARAGAKAGAKAGTSEISASATADPTTSASATVTAGFEDDYDDEEPLYTSTSTIMLTVTMSTDQNELSPSQNTANAELGISEQDAIKDEFEAWFKVVDQKSSGVVKTFNKEVNKYLHHRVQQLDSIFQNKTKTVSEVLQNRYKNLNRAIQDINCTCETDTGAGNQTCFDSTGTTQLSEYITRSKMRELFAEAHSTLDQSMLQLKQDLEPIAQEVESRVSLIREEMVEVYEEWGDAMVSEWSKRLAYIDVVAGHLDDNGASTDEESSENWRKFLNLKKQVIKARDELAEHPADLHEIKQFVKKVHYLIEVLAKEAGEYLYILRARANLAFQAREQESKQREDSPRMDRDSTQNVENSNTTTASAEKSGKKAKKVKRVAQNGTNSTEKFSAGPDSSSKEPSMETTVQNNVTLQI</sequence>
<protein>
    <recommendedName>
        <fullName evidence="1">Outer spore wall assembly protein SHE10</fullName>
    </recommendedName>
    <alternativeName>
        <fullName evidence="1">Sensitivity to high expression protein 10</fullName>
    </alternativeName>
</protein>
<keyword id="KW-0175">Coiled coil</keyword>
<keyword id="KW-0496">Mitochondrion</keyword>
<keyword id="KW-1185">Reference proteome</keyword>
<keyword id="KW-0687">Ribonucleoprotein</keyword>
<keyword id="KW-0732">Signal</keyword>
<keyword id="KW-0749">Sporulation</keyword>
<name>SHE10_ZYGRC</name>
<organism>
    <name type="scientific">Zygosaccharomyces rouxii (strain ATCC 2623 / CBS 732 / NBRC 1130 / NCYC 568 / NRRL Y-229)</name>
    <dbReference type="NCBI Taxonomy" id="559307"/>
    <lineage>
        <taxon>Eukaryota</taxon>
        <taxon>Fungi</taxon>
        <taxon>Dikarya</taxon>
        <taxon>Ascomycota</taxon>
        <taxon>Saccharomycotina</taxon>
        <taxon>Saccharomycetes</taxon>
        <taxon>Saccharomycetales</taxon>
        <taxon>Saccharomycetaceae</taxon>
        <taxon>Zygosaccharomyces</taxon>
    </lineage>
</organism>